<gene>
    <name evidence="1" type="primary">leuS</name>
    <name type="ordered locus">CMS1760</name>
</gene>
<proteinExistence type="inferred from homology"/>
<protein>
    <recommendedName>
        <fullName evidence="1">Leucine--tRNA ligase</fullName>
        <ecNumber evidence="1">6.1.1.4</ecNumber>
    </recommendedName>
    <alternativeName>
        <fullName evidence="1">Leucyl-tRNA synthetase</fullName>
        <shortName evidence="1">LeuRS</shortName>
    </alternativeName>
</protein>
<dbReference type="EC" id="6.1.1.4" evidence="1"/>
<dbReference type="EMBL" id="AM849034">
    <property type="protein sequence ID" value="CAQ01862.1"/>
    <property type="molecule type" value="Genomic_DNA"/>
</dbReference>
<dbReference type="RefSeq" id="WP_012299105.1">
    <property type="nucleotide sequence ID" value="NZ_MZMN01000003.1"/>
</dbReference>
<dbReference type="SMR" id="B0RDA6"/>
<dbReference type="STRING" id="31964.CMS1760"/>
<dbReference type="KEGG" id="cms:CMS1760"/>
<dbReference type="eggNOG" id="COG0495">
    <property type="taxonomic scope" value="Bacteria"/>
</dbReference>
<dbReference type="HOGENOM" id="CLU_004427_0_0_11"/>
<dbReference type="OrthoDB" id="9810365at2"/>
<dbReference type="Proteomes" id="UP000001318">
    <property type="component" value="Chromosome"/>
</dbReference>
<dbReference type="GO" id="GO:0005737">
    <property type="term" value="C:cytoplasm"/>
    <property type="evidence" value="ECO:0007669"/>
    <property type="project" value="UniProtKB-SubCell"/>
</dbReference>
<dbReference type="GO" id="GO:0002161">
    <property type="term" value="F:aminoacyl-tRNA deacylase activity"/>
    <property type="evidence" value="ECO:0007669"/>
    <property type="project" value="InterPro"/>
</dbReference>
<dbReference type="GO" id="GO:0005524">
    <property type="term" value="F:ATP binding"/>
    <property type="evidence" value="ECO:0007669"/>
    <property type="project" value="UniProtKB-UniRule"/>
</dbReference>
<dbReference type="GO" id="GO:0004823">
    <property type="term" value="F:leucine-tRNA ligase activity"/>
    <property type="evidence" value="ECO:0007669"/>
    <property type="project" value="UniProtKB-UniRule"/>
</dbReference>
<dbReference type="GO" id="GO:0006429">
    <property type="term" value="P:leucyl-tRNA aminoacylation"/>
    <property type="evidence" value="ECO:0007669"/>
    <property type="project" value="UniProtKB-UniRule"/>
</dbReference>
<dbReference type="CDD" id="cd07958">
    <property type="entry name" value="Anticodon_Ia_Leu_BEm"/>
    <property type="match status" value="1"/>
</dbReference>
<dbReference type="CDD" id="cd00812">
    <property type="entry name" value="LeuRS_core"/>
    <property type="match status" value="1"/>
</dbReference>
<dbReference type="FunFam" id="1.10.730.10:FF:000002">
    <property type="entry name" value="Leucine--tRNA ligase"/>
    <property type="match status" value="1"/>
</dbReference>
<dbReference type="FunFam" id="3.40.50.620:FF:000003">
    <property type="entry name" value="Leucine--tRNA ligase"/>
    <property type="match status" value="1"/>
</dbReference>
<dbReference type="FunFam" id="3.40.50.620:FF:000056">
    <property type="entry name" value="Leucine--tRNA ligase"/>
    <property type="match status" value="1"/>
</dbReference>
<dbReference type="Gene3D" id="3.10.20.590">
    <property type="match status" value="1"/>
</dbReference>
<dbReference type="Gene3D" id="3.40.50.620">
    <property type="entry name" value="HUPs"/>
    <property type="match status" value="2"/>
</dbReference>
<dbReference type="Gene3D" id="1.10.730.10">
    <property type="entry name" value="Isoleucyl-tRNA Synthetase, Domain 1"/>
    <property type="match status" value="1"/>
</dbReference>
<dbReference type="Gene3D" id="3.90.740.10">
    <property type="entry name" value="Valyl/Leucyl/Isoleucyl-tRNA synthetase, editing domain"/>
    <property type="match status" value="1"/>
</dbReference>
<dbReference type="HAMAP" id="MF_00049_B">
    <property type="entry name" value="Leu_tRNA_synth_B"/>
    <property type="match status" value="1"/>
</dbReference>
<dbReference type="InterPro" id="IPR001412">
    <property type="entry name" value="aa-tRNA-synth_I_CS"/>
</dbReference>
<dbReference type="InterPro" id="IPR002300">
    <property type="entry name" value="aa-tRNA-synth_Ia"/>
</dbReference>
<dbReference type="InterPro" id="IPR002302">
    <property type="entry name" value="Leu-tRNA-ligase"/>
</dbReference>
<dbReference type="InterPro" id="IPR025709">
    <property type="entry name" value="Leu_tRNA-synth_edit"/>
</dbReference>
<dbReference type="InterPro" id="IPR013155">
    <property type="entry name" value="M/V/L/I-tRNA-synth_anticd-bd"/>
</dbReference>
<dbReference type="InterPro" id="IPR014729">
    <property type="entry name" value="Rossmann-like_a/b/a_fold"/>
</dbReference>
<dbReference type="InterPro" id="IPR009080">
    <property type="entry name" value="tRNAsynth_Ia_anticodon-bd"/>
</dbReference>
<dbReference type="InterPro" id="IPR009008">
    <property type="entry name" value="Val/Leu/Ile-tRNA-synth_edit"/>
</dbReference>
<dbReference type="NCBIfam" id="TIGR00396">
    <property type="entry name" value="leuS_bact"/>
    <property type="match status" value="1"/>
</dbReference>
<dbReference type="PANTHER" id="PTHR43740:SF2">
    <property type="entry name" value="LEUCINE--TRNA LIGASE, MITOCHONDRIAL"/>
    <property type="match status" value="1"/>
</dbReference>
<dbReference type="PANTHER" id="PTHR43740">
    <property type="entry name" value="LEUCYL-TRNA SYNTHETASE"/>
    <property type="match status" value="1"/>
</dbReference>
<dbReference type="Pfam" id="PF08264">
    <property type="entry name" value="Anticodon_1"/>
    <property type="match status" value="1"/>
</dbReference>
<dbReference type="Pfam" id="PF00133">
    <property type="entry name" value="tRNA-synt_1"/>
    <property type="match status" value="2"/>
</dbReference>
<dbReference type="Pfam" id="PF13603">
    <property type="entry name" value="tRNA-synt_1_2"/>
    <property type="match status" value="1"/>
</dbReference>
<dbReference type="PRINTS" id="PR00985">
    <property type="entry name" value="TRNASYNTHLEU"/>
</dbReference>
<dbReference type="SUPFAM" id="SSF47323">
    <property type="entry name" value="Anticodon-binding domain of a subclass of class I aminoacyl-tRNA synthetases"/>
    <property type="match status" value="1"/>
</dbReference>
<dbReference type="SUPFAM" id="SSF52374">
    <property type="entry name" value="Nucleotidylyl transferase"/>
    <property type="match status" value="1"/>
</dbReference>
<dbReference type="SUPFAM" id="SSF50677">
    <property type="entry name" value="ValRS/IleRS/LeuRS editing domain"/>
    <property type="match status" value="1"/>
</dbReference>
<dbReference type="PROSITE" id="PS00178">
    <property type="entry name" value="AA_TRNA_LIGASE_I"/>
    <property type="match status" value="1"/>
</dbReference>
<organism>
    <name type="scientific">Clavibacter sepedonicus</name>
    <name type="common">Clavibacter michiganensis subsp. sepedonicus</name>
    <dbReference type="NCBI Taxonomy" id="31964"/>
    <lineage>
        <taxon>Bacteria</taxon>
        <taxon>Bacillati</taxon>
        <taxon>Actinomycetota</taxon>
        <taxon>Actinomycetes</taxon>
        <taxon>Micrococcales</taxon>
        <taxon>Microbacteriaceae</taxon>
        <taxon>Clavibacter</taxon>
    </lineage>
</organism>
<name>SYL_CLASE</name>
<keyword id="KW-0030">Aminoacyl-tRNA synthetase</keyword>
<keyword id="KW-0067">ATP-binding</keyword>
<keyword id="KW-0963">Cytoplasm</keyword>
<keyword id="KW-0436">Ligase</keyword>
<keyword id="KW-0547">Nucleotide-binding</keyword>
<keyword id="KW-0648">Protein biosynthesis</keyword>
<evidence type="ECO:0000255" key="1">
    <source>
        <dbReference type="HAMAP-Rule" id="MF_00049"/>
    </source>
</evidence>
<feature type="chain" id="PRO_0000334744" description="Leucine--tRNA ligase">
    <location>
        <begin position="1"/>
        <end position="852"/>
    </location>
</feature>
<feature type="short sequence motif" description="'HIGH' region">
    <location>
        <begin position="51"/>
        <end position="61"/>
    </location>
</feature>
<feature type="short sequence motif" description="'KMSKS' region">
    <location>
        <begin position="615"/>
        <end position="619"/>
    </location>
</feature>
<feature type="binding site" evidence="1">
    <location>
        <position position="618"/>
    </location>
    <ligand>
        <name>ATP</name>
        <dbReference type="ChEBI" id="CHEBI:30616"/>
    </ligand>
</feature>
<sequence>MAHETPDTPGETYDFRAIEAEWSEVWEREQPFRTPDASDSRPRKYILDMFPYPSGDLHMGHAEAFALGDAVARYWRQQGFNVLHPIGWDSFGLPAENAAIKRGVDPREWTYANIETQKQSMKRYGLSFDWERELHTSDPEYYRWNQWLFLKMHEKGLAYRKDSWVNWDPVDQTVLANEQVLPDGTSDRSGAVVVKKKLTQWYLRITDYADRLVDDLNQLEGTWPAKVLSMQRNWIGRSIGAEVDFVVEGRDEPVTVFTTRPDTLHGATFMVVAPDSDLAAELVEGASEEVRESFRGYLERTQRLNEIERSTTDRPKTGIPLGLTAINPVNGERIPVWAADYVLADYGTGAVMAVPAHDQRDLDFARAFDLPVRVVVDTTQPVTGAIRIIPEDGELPDLEEVLPGRTGVALPGEGRLINSGSLNGLSKQPAIKRVIEQLEAEGRGRAAKNYRLRDWLISRQRFWGTPIPIVYDAEGSEIRVPEDQLPVRLPDTEGLDLTPKGKSPLAAATAWSNVPSPVDGSPATRDPDTMDTFMDSSWYWLRFLSPNDATKAFDPADADRWAPIDQYVGGVEHAILHLLYSRFITKVLFDLGYVTFTEPFSALLNQGMVLSGGSKMSKSKGGVDLGSEMDRHGVDAIRLTMAFAGPPEDDIDWEDVSPSGSAKFLARAWRLTGDITSAPEVEWKTGDEALRRVTHRFLAEAPGMLEAFKFNVVIARTMELVNAIRKTIDQGPGGGDAAVREATEVVAVALSLFAPYTAEDMWKRLGREGSVAFAGWRKADRNLLVQTTVTAVVQVDGKVRDKLEVDAKIGADELEALARETAGVRRSTAGRTIDKVIVRAPKIVSITTTPAP</sequence>
<accession>B0RDA6</accession>
<comment type="catalytic activity">
    <reaction evidence="1">
        <text>tRNA(Leu) + L-leucine + ATP = L-leucyl-tRNA(Leu) + AMP + diphosphate</text>
        <dbReference type="Rhea" id="RHEA:11688"/>
        <dbReference type="Rhea" id="RHEA-COMP:9613"/>
        <dbReference type="Rhea" id="RHEA-COMP:9622"/>
        <dbReference type="ChEBI" id="CHEBI:30616"/>
        <dbReference type="ChEBI" id="CHEBI:33019"/>
        <dbReference type="ChEBI" id="CHEBI:57427"/>
        <dbReference type="ChEBI" id="CHEBI:78442"/>
        <dbReference type="ChEBI" id="CHEBI:78494"/>
        <dbReference type="ChEBI" id="CHEBI:456215"/>
        <dbReference type="EC" id="6.1.1.4"/>
    </reaction>
</comment>
<comment type="subcellular location">
    <subcellularLocation>
        <location evidence="1">Cytoplasm</location>
    </subcellularLocation>
</comment>
<comment type="similarity">
    <text evidence="1">Belongs to the class-I aminoacyl-tRNA synthetase family.</text>
</comment>
<reference key="1">
    <citation type="journal article" date="2008" name="J. Bacteriol.">
        <title>Genome of the actinomycete plant pathogen Clavibacter michiganensis subsp. sepedonicus suggests recent niche adaptation.</title>
        <authorList>
            <person name="Bentley S.D."/>
            <person name="Corton C."/>
            <person name="Brown S.E."/>
            <person name="Barron A."/>
            <person name="Clark L."/>
            <person name="Doggett J."/>
            <person name="Harris B."/>
            <person name="Ormond D."/>
            <person name="Quail M.A."/>
            <person name="May G."/>
            <person name="Francis D."/>
            <person name="Knudson D."/>
            <person name="Parkhill J."/>
            <person name="Ishimaru C.A."/>
        </authorList>
    </citation>
    <scope>NUCLEOTIDE SEQUENCE [LARGE SCALE GENOMIC DNA]</scope>
    <source>
        <strain>ATCC 33113 / DSM 20744 / JCM 9667 / LMG 2889 / ICMP 2535 / C-1</strain>
    </source>
</reference>